<feature type="chain" id="PRO_1000140902" description="Small ribosomal subunit protein uS5">
    <location>
        <begin position="1"/>
        <end position="172"/>
    </location>
</feature>
<feature type="domain" description="S5 DRBM" evidence="1">
    <location>
        <begin position="17"/>
        <end position="80"/>
    </location>
</feature>
<keyword id="KW-0687">Ribonucleoprotein</keyword>
<keyword id="KW-0689">Ribosomal protein</keyword>
<keyword id="KW-0694">RNA-binding</keyword>
<keyword id="KW-0699">rRNA-binding</keyword>
<dbReference type="EMBL" id="CP000805">
    <property type="protein sequence ID" value="ACD70632.1"/>
    <property type="molecule type" value="Genomic_DNA"/>
</dbReference>
<dbReference type="RefSeq" id="WP_010881653.1">
    <property type="nucleotide sequence ID" value="NC_021508.1"/>
</dbReference>
<dbReference type="SMR" id="B2S2F3"/>
<dbReference type="GeneID" id="93875993"/>
<dbReference type="KEGG" id="tpp:TPASS_0206a"/>
<dbReference type="PATRIC" id="fig|455434.6.peg.209"/>
<dbReference type="Proteomes" id="UP000001202">
    <property type="component" value="Chromosome"/>
</dbReference>
<dbReference type="GO" id="GO:0015935">
    <property type="term" value="C:small ribosomal subunit"/>
    <property type="evidence" value="ECO:0007669"/>
    <property type="project" value="InterPro"/>
</dbReference>
<dbReference type="GO" id="GO:0019843">
    <property type="term" value="F:rRNA binding"/>
    <property type="evidence" value="ECO:0007669"/>
    <property type="project" value="UniProtKB-UniRule"/>
</dbReference>
<dbReference type="GO" id="GO:0003735">
    <property type="term" value="F:structural constituent of ribosome"/>
    <property type="evidence" value="ECO:0007669"/>
    <property type="project" value="InterPro"/>
</dbReference>
<dbReference type="GO" id="GO:0006412">
    <property type="term" value="P:translation"/>
    <property type="evidence" value="ECO:0007669"/>
    <property type="project" value="UniProtKB-UniRule"/>
</dbReference>
<dbReference type="FunFam" id="3.30.160.20:FF:000001">
    <property type="entry name" value="30S ribosomal protein S5"/>
    <property type="match status" value="1"/>
</dbReference>
<dbReference type="FunFam" id="3.30.230.10:FF:000002">
    <property type="entry name" value="30S ribosomal protein S5"/>
    <property type="match status" value="1"/>
</dbReference>
<dbReference type="Gene3D" id="3.30.160.20">
    <property type="match status" value="1"/>
</dbReference>
<dbReference type="Gene3D" id="3.30.230.10">
    <property type="match status" value="1"/>
</dbReference>
<dbReference type="HAMAP" id="MF_01307_B">
    <property type="entry name" value="Ribosomal_uS5_B"/>
    <property type="match status" value="1"/>
</dbReference>
<dbReference type="InterPro" id="IPR020568">
    <property type="entry name" value="Ribosomal_Su5_D2-typ_SF"/>
</dbReference>
<dbReference type="InterPro" id="IPR000851">
    <property type="entry name" value="Ribosomal_uS5"/>
</dbReference>
<dbReference type="InterPro" id="IPR005712">
    <property type="entry name" value="Ribosomal_uS5_bac-type"/>
</dbReference>
<dbReference type="InterPro" id="IPR005324">
    <property type="entry name" value="Ribosomal_uS5_C"/>
</dbReference>
<dbReference type="InterPro" id="IPR013810">
    <property type="entry name" value="Ribosomal_uS5_N"/>
</dbReference>
<dbReference type="InterPro" id="IPR018192">
    <property type="entry name" value="Ribosomal_uS5_N_CS"/>
</dbReference>
<dbReference type="InterPro" id="IPR014721">
    <property type="entry name" value="Ribsml_uS5_D2-typ_fold_subgr"/>
</dbReference>
<dbReference type="NCBIfam" id="TIGR01021">
    <property type="entry name" value="rpsE_bact"/>
    <property type="match status" value="1"/>
</dbReference>
<dbReference type="PANTHER" id="PTHR48277">
    <property type="entry name" value="MITOCHONDRIAL RIBOSOMAL PROTEIN S5"/>
    <property type="match status" value="1"/>
</dbReference>
<dbReference type="PANTHER" id="PTHR48277:SF1">
    <property type="entry name" value="MITOCHONDRIAL RIBOSOMAL PROTEIN S5"/>
    <property type="match status" value="1"/>
</dbReference>
<dbReference type="Pfam" id="PF00333">
    <property type="entry name" value="Ribosomal_S5"/>
    <property type="match status" value="1"/>
</dbReference>
<dbReference type="Pfam" id="PF03719">
    <property type="entry name" value="Ribosomal_S5_C"/>
    <property type="match status" value="1"/>
</dbReference>
<dbReference type="SUPFAM" id="SSF54768">
    <property type="entry name" value="dsRNA-binding domain-like"/>
    <property type="match status" value="1"/>
</dbReference>
<dbReference type="SUPFAM" id="SSF54211">
    <property type="entry name" value="Ribosomal protein S5 domain 2-like"/>
    <property type="match status" value="1"/>
</dbReference>
<dbReference type="PROSITE" id="PS00585">
    <property type="entry name" value="RIBOSOMAL_S5"/>
    <property type="match status" value="1"/>
</dbReference>
<dbReference type="PROSITE" id="PS50881">
    <property type="entry name" value="S5_DSRBD"/>
    <property type="match status" value="1"/>
</dbReference>
<reference key="1">
    <citation type="journal article" date="2008" name="BMC Microbiol.">
        <title>Complete genome sequence of Treponema pallidum ssp. pallidum strain SS14 determined with oligonucleotide arrays.</title>
        <authorList>
            <person name="Matejkova P."/>
            <person name="Strouhal M."/>
            <person name="Smajs D."/>
            <person name="Norris S.J."/>
            <person name="Palzkill T."/>
            <person name="Petrosino J.F."/>
            <person name="Sodergren E."/>
            <person name="Norton J.E."/>
            <person name="Singh J."/>
            <person name="Richmond T.A."/>
            <person name="Molla M.N."/>
            <person name="Albert T.J."/>
            <person name="Weinstock G.M."/>
        </authorList>
    </citation>
    <scope>NUCLEOTIDE SEQUENCE [LARGE SCALE GENOMIC DNA]</scope>
    <source>
        <strain>SS14</strain>
    </source>
</reference>
<name>RS5_TREPS</name>
<organism>
    <name type="scientific">Treponema pallidum subsp. pallidum (strain SS14)</name>
    <dbReference type="NCBI Taxonomy" id="455434"/>
    <lineage>
        <taxon>Bacteria</taxon>
        <taxon>Pseudomonadati</taxon>
        <taxon>Spirochaetota</taxon>
        <taxon>Spirochaetia</taxon>
        <taxon>Spirochaetales</taxon>
        <taxon>Treponemataceae</taxon>
        <taxon>Treponema</taxon>
    </lineage>
</organism>
<evidence type="ECO:0000255" key="1">
    <source>
        <dbReference type="HAMAP-Rule" id="MF_01307"/>
    </source>
</evidence>
<evidence type="ECO:0000305" key="2"/>
<sequence>MDRHRDFGKDRLRDKEFTEKLIKLNRTAKVVKGGRRFSFSALTVVGDQKGRVGFGFGKAGDVSEAIRKSVERAKRSMVLFPLKDGTIPHEVQAKFKGSLVLLRPACSGTGIIAGGTVRAIMEVAGATDVLSKSLGSNSAINVVRATFGAVAQLMDARKLARERGKALVDMWG</sequence>
<gene>
    <name evidence="1" type="primary">rpsE</name>
    <name type="ordered locus">TPASS_0206.1</name>
    <name type="ORF">TPASS_0206a</name>
</gene>
<accession>B2S2F3</accession>
<protein>
    <recommendedName>
        <fullName evidence="1">Small ribosomal subunit protein uS5</fullName>
    </recommendedName>
    <alternativeName>
        <fullName evidence="2">30S ribosomal protein S5</fullName>
    </alternativeName>
</protein>
<proteinExistence type="inferred from homology"/>
<comment type="function">
    <text evidence="1">With S4 and S12 plays an important role in translational accuracy.</text>
</comment>
<comment type="function">
    <text evidence="1">Located at the back of the 30S subunit body where it stabilizes the conformation of the head with respect to the body.</text>
</comment>
<comment type="subunit">
    <text evidence="1">Part of the 30S ribosomal subunit. Contacts proteins S4 and S8.</text>
</comment>
<comment type="domain">
    <text>The N-terminal domain interacts with the head of the 30S subunit; the C-terminal domain interacts with the body and contacts protein S4. The interaction surface between S4 and S5 is involved in control of translational fidelity.</text>
</comment>
<comment type="similarity">
    <text evidence="1">Belongs to the universal ribosomal protein uS5 family.</text>
</comment>